<gene>
    <name evidence="1" type="primary">aroQ</name>
    <name type="ordered locus">CTN_0321</name>
</gene>
<reference key="1">
    <citation type="submission" date="2007-11" db="EMBL/GenBank/DDBJ databases">
        <title>The genome sequence of the hyperthermophilic bacterium Thermotoga neapolitana.</title>
        <authorList>
            <person name="Lim S.K."/>
            <person name="Kim J.S."/>
            <person name="Cha S.H."/>
            <person name="Park B.C."/>
            <person name="Lee D.S."/>
            <person name="Tae H.S."/>
            <person name="Kim S.-J."/>
            <person name="Kim J.J."/>
            <person name="Park K.J."/>
            <person name="Lee S.Y."/>
        </authorList>
    </citation>
    <scope>NUCLEOTIDE SEQUENCE [LARGE SCALE GENOMIC DNA]</scope>
    <source>
        <strain>ATCC 49049 / DSM 4359 / NBRC 107923 / NS-E</strain>
    </source>
</reference>
<accession>B9KBV1</accession>
<evidence type="ECO:0000255" key="1">
    <source>
        <dbReference type="HAMAP-Rule" id="MF_00169"/>
    </source>
</evidence>
<keyword id="KW-0028">Amino-acid biosynthesis</keyword>
<keyword id="KW-0057">Aromatic amino acid biosynthesis</keyword>
<keyword id="KW-0456">Lyase</keyword>
<organism>
    <name type="scientific">Thermotoga neapolitana (strain ATCC 49049 / DSM 4359 / NBRC 107923 / NS-E)</name>
    <dbReference type="NCBI Taxonomy" id="309803"/>
    <lineage>
        <taxon>Bacteria</taxon>
        <taxon>Thermotogati</taxon>
        <taxon>Thermotogota</taxon>
        <taxon>Thermotogae</taxon>
        <taxon>Thermotogales</taxon>
        <taxon>Thermotogaceae</taxon>
        <taxon>Thermotoga</taxon>
    </lineage>
</organism>
<sequence length="145" mass="16513">MKLLVVNGPNLNMLGKRDRNVYGNFTYDDLVRMIEDWAKRNGVEVEVFQSNHEGEIIDRLHRLDFDGLVINPGAFTHYSYAIRDALEIVKVPKVEVHISNIHGREEFRRKSVTAEVCDGQISGLGAYGYILALEYVRKVSSESSK</sequence>
<protein>
    <recommendedName>
        <fullName evidence="1">3-dehydroquinate dehydratase</fullName>
        <shortName evidence="1">3-dehydroquinase</shortName>
        <ecNumber evidence="1">4.2.1.10</ecNumber>
    </recommendedName>
    <alternativeName>
        <fullName evidence="1">Type II DHQase</fullName>
    </alternativeName>
</protein>
<name>AROQ_THENN</name>
<dbReference type="EC" id="4.2.1.10" evidence="1"/>
<dbReference type="EMBL" id="CP000916">
    <property type="protein sequence ID" value="ACM22497.1"/>
    <property type="molecule type" value="Genomic_DNA"/>
</dbReference>
<dbReference type="RefSeq" id="WP_015918826.1">
    <property type="nucleotide sequence ID" value="NC_011978.1"/>
</dbReference>
<dbReference type="SMR" id="B9KBV1"/>
<dbReference type="STRING" id="309803.CTN_0321"/>
<dbReference type="KEGG" id="tna:CTN_0321"/>
<dbReference type="eggNOG" id="COG0757">
    <property type="taxonomic scope" value="Bacteria"/>
</dbReference>
<dbReference type="HOGENOM" id="CLU_090968_3_0_0"/>
<dbReference type="UniPathway" id="UPA00053">
    <property type="reaction ID" value="UER00086"/>
</dbReference>
<dbReference type="Proteomes" id="UP000000445">
    <property type="component" value="Chromosome"/>
</dbReference>
<dbReference type="GO" id="GO:0003855">
    <property type="term" value="F:3-dehydroquinate dehydratase activity"/>
    <property type="evidence" value="ECO:0007669"/>
    <property type="project" value="UniProtKB-UniRule"/>
</dbReference>
<dbReference type="GO" id="GO:0008652">
    <property type="term" value="P:amino acid biosynthetic process"/>
    <property type="evidence" value="ECO:0007669"/>
    <property type="project" value="UniProtKB-KW"/>
</dbReference>
<dbReference type="GO" id="GO:0009073">
    <property type="term" value="P:aromatic amino acid family biosynthetic process"/>
    <property type="evidence" value="ECO:0007669"/>
    <property type="project" value="UniProtKB-KW"/>
</dbReference>
<dbReference type="GO" id="GO:0009423">
    <property type="term" value="P:chorismate biosynthetic process"/>
    <property type="evidence" value="ECO:0007669"/>
    <property type="project" value="UniProtKB-UniRule"/>
</dbReference>
<dbReference type="GO" id="GO:0019631">
    <property type="term" value="P:quinate catabolic process"/>
    <property type="evidence" value="ECO:0007669"/>
    <property type="project" value="TreeGrafter"/>
</dbReference>
<dbReference type="CDD" id="cd00466">
    <property type="entry name" value="DHQase_II"/>
    <property type="match status" value="1"/>
</dbReference>
<dbReference type="Gene3D" id="3.40.50.9100">
    <property type="entry name" value="Dehydroquinase, class II"/>
    <property type="match status" value="1"/>
</dbReference>
<dbReference type="HAMAP" id="MF_00169">
    <property type="entry name" value="AroQ"/>
    <property type="match status" value="1"/>
</dbReference>
<dbReference type="InterPro" id="IPR001874">
    <property type="entry name" value="DHquinase_II"/>
</dbReference>
<dbReference type="InterPro" id="IPR018509">
    <property type="entry name" value="DHquinase_II_CS"/>
</dbReference>
<dbReference type="InterPro" id="IPR036441">
    <property type="entry name" value="DHquinase_II_sf"/>
</dbReference>
<dbReference type="NCBIfam" id="TIGR01088">
    <property type="entry name" value="aroQ"/>
    <property type="match status" value="1"/>
</dbReference>
<dbReference type="NCBIfam" id="NF003805">
    <property type="entry name" value="PRK05395.1-2"/>
    <property type="match status" value="1"/>
</dbReference>
<dbReference type="NCBIfam" id="NF003807">
    <property type="entry name" value="PRK05395.1-4"/>
    <property type="match status" value="1"/>
</dbReference>
<dbReference type="PANTHER" id="PTHR21272">
    <property type="entry name" value="CATABOLIC 3-DEHYDROQUINASE"/>
    <property type="match status" value="1"/>
</dbReference>
<dbReference type="PANTHER" id="PTHR21272:SF3">
    <property type="entry name" value="CATABOLIC 3-DEHYDROQUINASE"/>
    <property type="match status" value="1"/>
</dbReference>
<dbReference type="Pfam" id="PF01220">
    <property type="entry name" value="DHquinase_II"/>
    <property type="match status" value="1"/>
</dbReference>
<dbReference type="PIRSF" id="PIRSF001399">
    <property type="entry name" value="DHquinase_II"/>
    <property type="match status" value="1"/>
</dbReference>
<dbReference type="SUPFAM" id="SSF52304">
    <property type="entry name" value="Type II 3-dehydroquinate dehydratase"/>
    <property type="match status" value="1"/>
</dbReference>
<dbReference type="PROSITE" id="PS01029">
    <property type="entry name" value="DEHYDROQUINASE_II"/>
    <property type="match status" value="1"/>
</dbReference>
<proteinExistence type="inferred from homology"/>
<feature type="chain" id="PRO_1000123699" description="3-dehydroquinate dehydratase">
    <location>
        <begin position="1"/>
        <end position="145"/>
    </location>
</feature>
<feature type="active site" description="Proton acceptor" evidence="1">
    <location>
        <position position="22"/>
    </location>
</feature>
<feature type="active site" description="Proton donor" evidence="1">
    <location>
        <position position="97"/>
    </location>
</feature>
<feature type="binding site" evidence="1">
    <location>
        <position position="71"/>
    </location>
    <ligand>
        <name>substrate</name>
    </ligand>
</feature>
<feature type="binding site" evidence="1">
    <location>
        <position position="77"/>
    </location>
    <ligand>
        <name>substrate</name>
    </ligand>
</feature>
<feature type="binding site" evidence="1">
    <location>
        <position position="84"/>
    </location>
    <ligand>
        <name>substrate</name>
    </ligand>
</feature>
<feature type="binding site" evidence="1">
    <location>
        <begin position="98"/>
        <end position="99"/>
    </location>
    <ligand>
        <name>substrate</name>
    </ligand>
</feature>
<feature type="binding site" evidence="1">
    <location>
        <position position="108"/>
    </location>
    <ligand>
        <name>substrate</name>
    </ligand>
</feature>
<feature type="site" description="Transition state stabilizer" evidence="1">
    <location>
        <position position="17"/>
    </location>
</feature>
<comment type="function">
    <text evidence="1">Catalyzes a trans-dehydration via an enolate intermediate.</text>
</comment>
<comment type="catalytic activity">
    <reaction evidence="1">
        <text>3-dehydroquinate = 3-dehydroshikimate + H2O</text>
        <dbReference type="Rhea" id="RHEA:21096"/>
        <dbReference type="ChEBI" id="CHEBI:15377"/>
        <dbReference type="ChEBI" id="CHEBI:16630"/>
        <dbReference type="ChEBI" id="CHEBI:32364"/>
        <dbReference type="EC" id="4.2.1.10"/>
    </reaction>
</comment>
<comment type="pathway">
    <text evidence="1">Metabolic intermediate biosynthesis; chorismate biosynthesis; chorismate from D-erythrose 4-phosphate and phosphoenolpyruvate: step 3/7.</text>
</comment>
<comment type="subunit">
    <text evidence="1">Homododecamer.</text>
</comment>
<comment type="similarity">
    <text evidence="1">Belongs to the type-II 3-dehydroquinase family.</text>
</comment>